<dbReference type="EC" id="3.4.21.-"/>
<dbReference type="EMBL" id="AF263455">
    <property type="protein sequence ID" value="AAG11416.2"/>
    <property type="molecule type" value="mRNA"/>
</dbReference>
<dbReference type="EMBL" id="AAFI02000199">
    <property type="protein sequence ID" value="EAL60853.1"/>
    <property type="molecule type" value="Genomic_DNA"/>
</dbReference>
<dbReference type="RefSeq" id="XP_629328.1">
    <property type="nucleotide sequence ID" value="XM_629326.1"/>
</dbReference>
<dbReference type="SMR" id="Q9GTN7"/>
<dbReference type="FunCoup" id="Q9GTN7">
    <property type="interactions" value="744"/>
</dbReference>
<dbReference type="STRING" id="44689.Q9GTN7"/>
<dbReference type="MEROPS" id="S08.128"/>
<dbReference type="TCDB" id="3.A.1.201.40">
    <property type="family name" value="the atp-binding cassette (abc) superfamily"/>
</dbReference>
<dbReference type="GlyCosmos" id="Q9GTN7">
    <property type="glycosylation" value="10 sites, No reported glycans"/>
</dbReference>
<dbReference type="GlyGen" id="Q9GTN7">
    <property type="glycosylation" value="11 sites"/>
</dbReference>
<dbReference type="PaxDb" id="44689-DDB0229852"/>
<dbReference type="EnsemblProtists" id="EAL60853">
    <property type="protein sequence ID" value="EAL60853"/>
    <property type="gene ID" value="DDB_G0293002"/>
</dbReference>
<dbReference type="GeneID" id="8629052"/>
<dbReference type="KEGG" id="ddi:DDB_G0293002"/>
<dbReference type="dictyBase" id="DDB_G0293002">
    <property type="gene designation" value="tagA"/>
</dbReference>
<dbReference type="VEuPathDB" id="AmoebaDB:DDB_G0293002"/>
<dbReference type="eggNOG" id="KOG0058">
    <property type="taxonomic scope" value="Eukaryota"/>
</dbReference>
<dbReference type="HOGENOM" id="CLU_239373_0_0_1"/>
<dbReference type="InParanoid" id="Q9GTN7"/>
<dbReference type="OMA" id="KGMFYDF"/>
<dbReference type="PhylomeDB" id="Q9GTN7"/>
<dbReference type="Reactome" id="R-DDI-1369007">
    <property type="pathway name" value="Mitochondrial ABC transporters"/>
</dbReference>
<dbReference type="Reactome" id="R-DDI-159418">
    <property type="pathway name" value="Recycling of bile acids and salts"/>
</dbReference>
<dbReference type="Reactome" id="R-DDI-193368">
    <property type="pathway name" value="Synthesis of bile acids and bile salts via 7alpha-hydroxycholesterol"/>
</dbReference>
<dbReference type="Reactome" id="R-DDI-382556">
    <property type="pathway name" value="ABC-family proteins mediated transport"/>
</dbReference>
<dbReference type="Reactome" id="R-DDI-9754706">
    <property type="pathway name" value="Atorvastatin ADME"/>
</dbReference>
<dbReference type="Reactome" id="R-DDI-9757110">
    <property type="pathway name" value="Prednisone ADME"/>
</dbReference>
<dbReference type="PRO" id="PR:Q9GTN7"/>
<dbReference type="Proteomes" id="UP000002195">
    <property type="component" value="Chromosome 6"/>
</dbReference>
<dbReference type="GO" id="GO:0016020">
    <property type="term" value="C:membrane"/>
    <property type="evidence" value="ECO:0000318"/>
    <property type="project" value="GO_Central"/>
</dbReference>
<dbReference type="GO" id="GO:0140359">
    <property type="term" value="F:ABC-type transporter activity"/>
    <property type="evidence" value="ECO:0007669"/>
    <property type="project" value="InterPro"/>
</dbReference>
<dbReference type="GO" id="GO:0005524">
    <property type="term" value="F:ATP binding"/>
    <property type="evidence" value="ECO:0007669"/>
    <property type="project" value="UniProtKB-KW"/>
</dbReference>
<dbReference type="GO" id="GO:0016887">
    <property type="term" value="F:ATP hydrolysis activity"/>
    <property type="evidence" value="ECO:0007669"/>
    <property type="project" value="InterPro"/>
</dbReference>
<dbReference type="GO" id="GO:0042626">
    <property type="term" value="F:ATPase-coupled transmembrane transporter activity"/>
    <property type="evidence" value="ECO:0000318"/>
    <property type="project" value="GO_Central"/>
</dbReference>
<dbReference type="GO" id="GO:0004252">
    <property type="term" value="F:serine-type endopeptidase activity"/>
    <property type="evidence" value="ECO:0007669"/>
    <property type="project" value="InterPro"/>
</dbReference>
<dbReference type="GO" id="GO:0008236">
    <property type="term" value="F:serine-type peptidase activity"/>
    <property type="evidence" value="ECO:0000317"/>
    <property type="project" value="dictyBase"/>
</dbReference>
<dbReference type="GO" id="GO:0030154">
    <property type="term" value="P:cell differentiation"/>
    <property type="evidence" value="ECO:0007669"/>
    <property type="project" value="UniProtKB-KW"/>
</dbReference>
<dbReference type="GO" id="GO:0006508">
    <property type="term" value="P:proteolysis"/>
    <property type="evidence" value="ECO:0000317"/>
    <property type="project" value="dictyBase"/>
</dbReference>
<dbReference type="GO" id="GO:0045595">
    <property type="term" value="P:regulation of cell differentiation"/>
    <property type="evidence" value="ECO:0000315"/>
    <property type="project" value="dictyBase"/>
</dbReference>
<dbReference type="GO" id="GO:0055085">
    <property type="term" value="P:transmembrane transport"/>
    <property type="evidence" value="ECO:0000318"/>
    <property type="project" value="GO_Central"/>
</dbReference>
<dbReference type="CDD" id="cd18557">
    <property type="entry name" value="ABC_6TM_TAP_ABCB8_10_like"/>
    <property type="match status" value="1"/>
</dbReference>
<dbReference type="CDD" id="cd04842">
    <property type="entry name" value="Peptidases_S8_Kp43_protease"/>
    <property type="match status" value="1"/>
</dbReference>
<dbReference type="FunFam" id="1.20.1560.10:FF:000215">
    <property type="entry name" value="ABC transporter B family member 4"/>
    <property type="match status" value="1"/>
</dbReference>
<dbReference type="FunFam" id="3.40.50.300:FF:001443">
    <property type="entry name" value="ABC transporter, ATP-binding protein"/>
    <property type="match status" value="1"/>
</dbReference>
<dbReference type="FunFam" id="2.60.120.380:FF:000024">
    <property type="entry name" value="Serine protease/ABC transporter B family protein tagA"/>
    <property type="match status" value="1"/>
</dbReference>
<dbReference type="Gene3D" id="2.60.120.380">
    <property type="match status" value="1"/>
</dbReference>
<dbReference type="Gene3D" id="1.20.1560.10">
    <property type="entry name" value="ABC transporter type 1, transmembrane domain"/>
    <property type="match status" value="1"/>
</dbReference>
<dbReference type="Gene3D" id="3.40.50.300">
    <property type="entry name" value="P-loop containing nucleotide triphosphate hydrolases"/>
    <property type="match status" value="1"/>
</dbReference>
<dbReference type="Gene3D" id="3.40.50.200">
    <property type="entry name" value="Peptidase S8/S53 domain"/>
    <property type="match status" value="1"/>
</dbReference>
<dbReference type="InterPro" id="IPR003593">
    <property type="entry name" value="AAA+_ATPase"/>
</dbReference>
<dbReference type="InterPro" id="IPR011527">
    <property type="entry name" value="ABC1_TM_dom"/>
</dbReference>
<dbReference type="InterPro" id="IPR036640">
    <property type="entry name" value="ABC1_TM_sf"/>
</dbReference>
<dbReference type="InterPro" id="IPR003439">
    <property type="entry name" value="ABC_transporter-like_ATP-bd"/>
</dbReference>
<dbReference type="InterPro" id="IPR017871">
    <property type="entry name" value="ABC_transporter-like_CS"/>
</dbReference>
<dbReference type="InterPro" id="IPR008979">
    <property type="entry name" value="Galactose-bd-like_sf"/>
</dbReference>
<dbReference type="InterPro" id="IPR027417">
    <property type="entry name" value="P-loop_NTPase"/>
</dbReference>
<dbReference type="InterPro" id="IPR000209">
    <property type="entry name" value="Peptidase_S8/S53_dom"/>
</dbReference>
<dbReference type="InterPro" id="IPR036852">
    <property type="entry name" value="Peptidase_S8/S53_dom_sf"/>
</dbReference>
<dbReference type="InterPro" id="IPR015500">
    <property type="entry name" value="Peptidase_S8_subtilisin-rel"/>
</dbReference>
<dbReference type="InterPro" id="IPR034058">
    <property type="entry name" value="TagA/B/C/D_pept_dom"/>
</dbReference>
<dbReference type="InterPro" id="IPR039421">
    <property type="entry name" value="Type_1_exporter"/>
</dbReference>
<dbReference type="PANTHER" id="PTHR43394:SF1">
    <property type="entry name" value="ATP-BINDING CASSETTE SUB-FAMILY B MEMBER 10, MITOCHONDRIAL"/>
    <property type="match status" value="1"/>
</dbReference>
<dbReference type="PANTHER" id="PTHR43394">
    <property type="entry name" value="ATP-DEPENDENT PERMEASE MDL1, MITOCHONDRIAL"/>
    <property type="match status" value="1"/>
</dbReference>
<dbReference type="Pfam" id="PF00664">
    <property type="entry name" value="ABC_membrane"/>
    <property type="match status" value="1"/>
</dbReference>
<dbReference type="Pfam" id="PF00005">
    <property type="entry name" value="ABC_tran"/>
    <property type="match status" value="1"/>
</dbReference>
<dbReference type="Pfam" id="PF00082">
    <property type="entry name" value="Peptidase_S8"/>
    <property type="match status" value="1"/>
</dbReference>
<dbReference type="PRINTS" id="PR00723">
    <property type="entry name" value="SUBTILISIN"/>
</dbReference>
<dbReference type="SMART" id="SM00382">
    <property type="entry name" value="AAA"/>
    <property type="match status" value="1"/>
</dbReference>
<dbReference type="SUPFAM" id="SSF90123">
    <property type="entry name" value="ABC transporter transmembrane region"/>
    <property type="match status" value="1"/>
</dbReference>
<dbReference type="SUPFAM" id="SSF49785">
    <property type="entry name" value="Galactose-binding domain-like"/>
    <property type="match status" value="1"/>
</dbReference>
<dbReference type="SUPFAM" id="SSF52540">
    <property type="entry name" value="P-loop containing nucleoside triphosphate hydrolases"/>
    <property type="match status" value="1"/>
</dbReference>
<dbReference type="SUPFAM" id="SSF52743">
    <property type="entry name" value="Subtilisin-like"/>
    <property type="match status" value="1"/>
</dbReference>
<dbReference type="PROSITE" id="PS50929">
    <property type="entry name" value="ABC_TM1F"/>
    <property type="match status" value="1"/>
</dbReference>
<dbReference type="PROSITE" id="PS00211">
    <property type="entry name" value="ABC_TRANSPORTER_1"/>
    <property type="match status" value="1"/>
</dbReference>
<dbReference type="PROSITE" id="PS50893">
    <property type="entry name" value="ABC_TRANSPORTER_2"/>
    <property type="match status" value="1"/>
</dbReference>
<dbReference type="PROSITE" id="PS51892">
    <property type="entry name" value="SUBTILASE"/>
    <property type="match status" value="1"/>
</dbReference>
<gene>
    <name type="primary">tagA</name>
    <name type="ORF">DDB_G0293002</name>
</gene>
<accession>Q9GTN7</accession>
<accession>Q54C91</accession>
<reference key="1">
    <citation type="journal article" date="2003" name="Development">
        <title>TagA, a putative serine protease/ABC transporter of Dictyostelium that is required for cell fate determination at the onset of development.</title>
        <authorList>
            <person name="Good J.R."/>
            <person name="Cabral M."/>
            <person name="Sharma S."/>
            <person name="Yang J."/>
            <person name="Van Driessche N."/>
            <person name="Shaw C.A."/>
            <person name="Shaulsky G."/>
            <person name="Kuspa A."/>
        </authorList>
    </citation>
    <scope>NUCLEOTIDE SEQUENCE [MRNA]</scope>
    <scope>FUNCTION</scope>
    <scope>SYNTHESIS OF 1623-1642</scope>
    <scope>DISRUPTION PHENOTYPE</scope>
    <scope>DEVELOPMENTAL STAGE</scope>
</reference>
<reference key="2">
    <citation type="submission" date="2004-10" db="EMBL/GenBank/DDBJ databases">
        <authorList>
            <person name="Good J.R."/>
            <person name="Cabral M."/>
            <person name="Kuspa A."/>
        </authorList>
    </citation>
    <scope>SEQUENCE REVISION TO 994 AND 1681-1752</scope>
</reference>
<reference key="3">
    <citation type="journal article" date="2005" name="Nature">
        <title>The genome of the social amoeba Dictyostelium discoideum.</title>
        <authorList>
            <person name="Eichinger L."/>
            <person name="Pachebat J.A."/>
            <person name="Gloeckner G."/>
            <person name="Rajandream M.A."/>
            <person name="Sucgang R."/>
            <person name="Berriman M."/>
            <person name="Song J."/>
            <person name="Olsen R."/>
            <person name="Szafranski K."/>
            <person name="Xu Q."/>
            <person name="Tunggal B."/>
            <person name="Kummerfeld S."/>
            <person name="Madera M."/>
            <person name="Konfortov B.A."/>
            <person name="Rivero F."/>
            <person name="Bankier A.T."/>
            <person name="Lehmann R."/>
            <person name="Hamlin N."/>
            <person name="Davies R."/>
            <person name="Gaudet P."/>
            <person name="Fey P."/>
            <person name="Pilcher K."/>
            <person name="Chen G."/>
            <person name="Saunders D."/>
            <person name="Sodergren E.J."/>
            <person name="Davis P."/>
            <person name="Kerhornou A."/>
            <person name="Nie X."/>
            <person name="Hall N."/>
            <person name="Anjard C."/>
            <person name="Hemphill L."/>
            <person name="Bason N."/>
            <person name="Farbrother P."/>
            <person name="Desany B."/>
            <person name="Just E."/>
            <person name="Morio T."/>
            <person name="Rost R."/>
            <person name="Churcher C.M."/>
            <person name="Cooper J."/>
            <person name="Haydock S."/>
            <person name="van Driessche N."/>
            <person name="Cronin A."/>
            <person name="Goodhead I."/>
            <person name="Muzny D.M."/>
            <person name="Mourier T."/>
            <person name="Pain A."/>
            <person name="Lu M."/>
            <person name="Harper D."/>
            <person name="Lindsay R."/>
            <person name="Hauser H."/>
            <person name="James K.D."/>
            <person name="Quiles M."/>
            <person name="Madan Babu M."/>
            <person name="Saito T."/>
            <person name="Buchrieser C."/>
            <person name="Wardroper A."/>
            <person name="Felder M."/>
            <person name="Thangavelu M."/>
            <person name="Johnson D."/>
            <person name="Knights A."/>
            <person name="Loulseged H."/>
            <person name="Mungall K.L."/>
            <person name="Oliver K."/>
            <person name="Price C."/>
            <person name="Quail M.A."/>
            <person name="Urushihara H."/>
            <person name="Hernandez J."/>
            <person name="Rabbinowitsch E."/>
            <person name="Steffen D."/>
            <person name="Sanders M."/>
            <person name="Ma J."/>
            <person name="Kohara Y."/>
            <person name="Sharp S."/>
            <person name="Simmonds M.N."/>
            <person name="Spiegler S."/>
            <person name="Tivey A."/>
            <person name="Sugano S."/>
            <person name="White B."/>
            <person name="Walker D."/>
            <person name="Woodward J.R."/>
            <person name="Winckler T."/>
            <person name="Tanaka Y."/>
            <person name="Shaulsky G."/>
            <person name="Schleicher M."/>
            <person name="Weinstock G.M."/>
            <person name="Rosenthal A."/>
            <person name="Cox E.C."/>
            <person name="Chisholm R.L."/>
            <person name="Gibbs R.A."/>
            <person name="Loomis W.F."/>
            <person name="Platzer M."/>
            <person name="Kay R.R."/>
            <person name="Williams J.G."/>
            <person name="Dear P.H."/>
            <person name="Noegel A.A."/>
            <person name="Barrell B.G."/>
            <person name="Kuspa A."/>
        </authorList>
    </citation>
    <scope>NUCLEOTIDE SEQUENCE [LARGE SCALE GENOMIC DNA]</scope>
    <source>
        <strain>AX4</strain>
    </source>
</reference>
<reference key="4">
    <citation type="journal article" date="2006" name="Eukaryot. Cell">
        <title>Genetic evidence that the acyl coenzyme A binding protein AcbA and the serine protease/ABC transporter TagA function together in Dictyostelium discoideum cell differentiation.</title>
        <authorList>
            <person name="Cabral M."/>
            <person name="Anjard C."/>
            <person name="Loomis W.F."/>
            <person name="Kuspa A."/>
        </authorList>
    </citation>
    <scope>FUNCTION</scope>
</reference>
<reference key="5">
    <citation type="journal article" date="2008" name="BMC Genomics">
        <title>Genome-wide transcriptional changes induced by phagocytosis or growth on bacteria in Dictyostelium.</title>
        <authorList>
            <person name="Sillo A."/>
            <person name="Bloomfield G."/>
            <person name="Balest A."/>
            <person name="Balbo A."/>
            <person name="Pergolizzi B."/>
            <person name="Peracino B."/>
            <person name="Skelton J."/>
            <person name="Ivens A."/>
            <person name="Bozzaro S."/>
        </authorList>
    </citation>
    <scope>INDUCTION</scope>
</reference>
<name>TAGA_DICDI</name>
<feature type="signal peptide" evidence="1">
    <location>
        <begin position="1"/>
        <end position="24"/>
    </location>
</feature>
<feature type="chain" id="PRO_0000391321" description="Serine protease/ABC transporter B family protein tagA">
    <location>
        <begin position="25"/>
        <end position="1752"/>
    </location>
</feature>
<feature type="transmembrane region" description="Helical" evidence="3">
    <location>
        <begin position="909"/>
        <end position="929"/>
    </location>
</feature>
<feature type="transmembrane region" description="Helical" evidence="3">
    <location>
        <begin position="1058"/>
        <end position="1078"/>
    </location>
</feature>
<feature type="transmembrane region" description="Helical" evidence="3">
    <location>
        <begin position="1102"/>
        <end position="1122"/>
    </location>
</feature>
<feature type="transmembrane region" description="Helical" evidence="3">
    <location>
        <begin position="1174"/>
        <end position="1194"/>
    </location>
</feature>
<feature type="transmembrane region" description="Helical" evidence="3">
    <location>
        <begin position="1200"/>
        <end position="1220"/>
    </location>
</feature>
<feature type="transmembrane region" description="Helical" evidence="3">
    <location>
        <begin position="1285"/>
        <end position="1305"/>
    </location>
</feature>
<feature type="transmembrane region" description="Helical" evidence="3">
    <location>
        <begin position="1315"/>
        <end position="1335"/>
    </location>
</feature>
<feature type="domain" description="Peptidase S8" evidence="4">
    <location>
        <begin position="280"/>
        <end position="696"/>
    </location>
</feature>
<feature type="domain" description="ABC transmembrane type-1" evidence="3">
    <location>
        <begin position="1059"/>
        <end position="1341"/>
    </location>
</feature>
<feature type="domain" description="ABC transporter" evidence="2">
    <location>
        <begin position="1374"/>
        <end position="1610"/>
    </location>
</feature>
<feature type="region of interest" description="Disordered" evidence="5">
    <location>
        <begin position="946"/>
        <end position="1032"/>
    </location>
</feature>
<feature type="region of interest" description="Disordered" evidence="5">
    <location>
        <begin position="1621"/>
        <end position="1686"/>
    </location>
</feature>
<feature type="compositionally biased region" description="Low complexity" evidence="5">
    <location>
        <begin position="962"/>
        <end position="994"/>
    </location>
</feature>
<feature type="compositionally biased region" description="Polar residues" evidence="5">
    <location>
        <begin position="995"/>
        <end position="1004"/>
    </location>
</feature>
<feature type="compositionally biased region" description="Low complexity" evidence="5">
    <location>
        <begin position="1013"/>
        <end position="1028"/>
    </location>
</feature>
<feature type="compositionally biased region" description="Basic and acidic residues" evidence="5">
    <location>
        <begin position="1631"/>
        <end position="1642"/>
    </location>
</feature>
<feature type="active site" description="Charge relay system" evidence="4">
    <location>
        <position position="312"/>
    </location>
</feature>
<feature type="active site" description="Charge relay system" evidence="4">
    <location>
        <position position="352"/>
    </location>
</feature>
<feature type="active site" description="Charge relay system" evidence="4">
    <location>
        <position position="625"/>
    </location>
</feature>
<feature type="binding site" evidence="2">
    <location>
        <begin position="1409"/>
        <end position="1416"/>
    </location>
    <ligand>
        <name>ATP</name>
        <dbReference type="ChEBI" id="CHEBI:30616"/>
    </ligand>
</feature>
<feature type="glycosylation site" description="N-linked (GlcNAc...) asparagine" evidence="1">
    <location>
        <position position="20"/>
    </location>
</feature>
<feature type="glycosylation site" description="N-linked (GlcNAc...) asparagine" evidence="1">
    <location>
        <position position="400"/>
    </location>
</feature>
<feature type="glycosylation site" description="N-linked (GlcNAc...) asparagine" evidence="1">
    <location>
        <position position="557"/>
    </location>
</feature>
<feature type="glycosylation site" description="N-linked (GlcNAc...) asparagine" evidence="1">
    <location>
        <position position="653"/>
    </location>
</feature>
<feature type="glycosylation site" description="N-linked (GlcNAc...) asparagine" evidence="1">
    <location>
        <position position="785"/>
    </location>
</feature>
<feature type="glycosylation site" description="N-linked (GlcNAc...) asparagine" evidence="1">
    <location>
        <position position="823"/>
    </location>
</feature>
<feature type="glycosylation site" description="N-linked (GlcNAc...) asparagine" evidence="1">
    <location>
        <position position="993"/>
    </location>
</feature>
<feature type="glycosylation site" description="N-linked (GlcNAc...) asparagine" evidence="1">
    <location>
        <position position="1638"/>
    </location>
</feature>
<feature type="glycosylation site" description="N-linked (GlcNAc...) asparagine" evidence="1">
    <location>
        <position position="1670"/>
    </location>
</feature>
<feature type="glycosylation site" description="N-linked (GlcNAc...) asparagine" evidence="1">
    <location>
        <position position="1694"/>
    </location>
</feature>
<evidence type="ECO:0000255" key="1"/>
<evidence type="ECO:0000255" key="2">
    <source>
        <dbReference type="PROSITE-ProRule" id="PRU00434"/>
    </source>
</evidence>
<evidence type="ECO:0000255" key="3">
    <source>
        <dbReference type="PROSITE-ProRule" id="PRU00441"/>
    </source>
</evidence>
<evidence type="ECO:0000255" key="4">
    <source>
        <dbReference type="PROSITE-ProRule" id="PRU01240"/>
    </source>
</evidence>
<evidence type="ECO:0000256" key="5">
    <source>
        <dbReference type="SAM" id="MobiDB-lite"/>
    </source>
</evidence>
<evidence type="ECO:0000269" key="6">
    <source>
    </source>
</evidence>
<evidence type="ECO:0000269" key="7">
    <source>
    </source>
</evidence>
<evidence type="ECO:0000269" key="8">
    <source>
    </source>
</evidence>
<evidence type="ECO:0000305" key="9"/>
<proteinExistence type="evidence at protein level"/>
<sequence>MNKKLFIFGLSLFLFLFIFNLSLSLKLSSKNNFYNHNHINNQIHRNNEGNNKLSKLIHLHNDVIDTTISNRDNILFNKKSLNQKSKGSLFLVHLNGPIEKQVHNELIKQLDQLFNGGEIIHYIPDNTYLISMIGSDNNDNNNNNKIELINRLKELIPSIQWLKPLEPRLKISPLFKQNQFQGDNQNEIDQLRIYYHENSNQQSNDIDNIISESSLTLVEKELISNNNNNNNNVLITVNLKNSKLSLESIIYKISTRSLVYWIEPSSSKLIKHTPSNKFAHYSIQSGSASTTSTPIWDVIGIKGDGEIVGCADTGIDINHCFFYDTNPIGSTHRKIISYSSGNGDQIDEIDGHGTHIVGTIIGSTTVDPSVSEFSGGAPNSKVAFVDLQVGSGNGLSIQSNLTAIYQSTYDQNAKVHCDAWNSNIGPFYTGVTEMIDRFQWDHPDFLVVRSAGNNVNFGFNSIYTLSQESTSKNSLVVGSSNQPSSTYLSSIDYWDWDFIYNSIRTSVCTQGQSIYGITCSDVPTQTTSVDIQTQCCSNPILAKICCSTEIQQQYQTNSTVYSEFIPSLFSGVGPTSDGRLKPDLLAPGSPIISSRSLGPSSTINHCSPITSGIATSALIAMEGSSQAAAVATSAAVLVRQYYRDGYFINGKVNSSVGFQPSASLVKATLINTASINVDSTLEYSQGFGNIQLSKLITTTNAQTTSLDIPSSIEKADPIINTGETNSYCFSLDSKADIDITLVWTDPAGSPLSTFTLVNNLDLALLAFVDGELSIYSGNSETIFKNTSQVIFDQLNNVEVIRIKDAPIGSYDVKIFGTNIVIPNQSYSVVIRTSGGTTLMKESECAQCFYDPNDDQSQMCEFDNGIGTQYCKDDNRFSKCVVYECNTGYVFDNGITKSCVTTLALTLYDIVLLGIFGIIIVGAVIFVLVCYKSKSLDQNKYFSLSKDKGGDGNSIRSNSVAGNNNNNNNNNNNNNNNNNNNNNNNNNNNNNNNNNSNGKQSNIELNSVGGGDDGTPNGDDQQQQNNSPQYDEDGRLISGQEVEISIFEVISLGKPESKILGLALFLSFIDVALGLAVPLVAANIFDYLYAGETGKISTTILTFALIIIGMIIVQFLSGILLALAGHRIIARLRREMFASLLKQDMAFFNERKTGELMSRLASDVSSVRSIISDSIPHMIIQIATIGGTLIMLFIISWKLSLVVLCPLPILLVFSKFYGGYIEVISVKVQDALADAATHAAETLFNMKTVRWFSAEEREVAKFSKLISVSYKIALKMTIWNGIYSSTSGIFEQLSVFILLWYGSSLVSNGDLTPSMLIAFNLFLPFITGAVTQVASLYTTYKSYKGSSYRFFEIMQRVPDIQGEGGITRTKVRGDIQFNKVSFAYSSNPDQLVLEKIDIKFEPGTITALIGPSGGGKSTMLSLIGRLYNIDGGSITLDGTNIKDFNVPNLHEHISIVNQEPSLFSGSIAENIMFGKPTATRSEIIEACKQANAHDFITAMPEGYDTLIGERGTALSGGQKQRIAIARTIIKNPTVLLLDETTSELDVESEKLVQDSIDKLVVGRTVIIVAHRLTTILTADIIAVVSDSTISEMGTPEELLAKKGMFYDFVQIQYGKQGEELDIQLPSNSRNTRNADKLRNRSETIKQIAKINNIIPIHRPQRGDDDNEDDENNSGQGSSRSPPPMWRQAKKNANVNKSMLLTRRNTHVQHQSSSGGWQKGNVDDKLQRVLQKSRKKGFMNNQDHKDIKATLVLY</sequence>
<protein>
    <recommendedName>
        <fullName>Serine protease/ABC transporter B family protein tagA</fullName>
        <ecNumber>3.4.21.-</ecNumber>
    </recommendedName>
</protein>
<organism>
    <name type="scientific">Dictyostelium discoideum</name>
    <name type="common">Social amoeba</name>
    <dbReference type="NCBI Taxonomy" id="44689"/>
    <lineage>
        <taxon>Eukaryota</taxon>
        <taxon>Amoebozoa</taxon>
        <taxon>Evosea</taxon>
        <taxon>Eumycetozoa</taxon>
        <taxon>Dictyostelia</taxon>
        <taxon>Dictyosteliales</taxon>
        <taxon>Dictyosteliaceae</taxon>
        <taxon>Dictyostelium</taxon>
    </lineage>
</organism>
<keyword id="KW-0067">ATP-binding</keyword>
<keyword id="KW-0221">Differentiation</keyword>
<keyword id="KW-0325">Glycoprotein</keyword>
<keyword id="KW-0378">Hydrolase</keyword>
<keyword id="KW-0472">Membrane</keyword>
<keyword id="KW-0547">Nucleotide-binding</keyword>
<keyword id="KW-0645">Protease</keyword>
<keyword id="KW-1185">Reference proteome</keyword>
<keyword id="KW-0720">Serine protease</keyword>
<keyword id="KW-0732">Signal</keyword>
<keyword id="KW-0812">Transmembrane</keyword>
<keyword id="KW-1133">Transmembrane helix</keyword>
<keyword id="KW-0813">Transport</keyword>
<comment type="function">
    <text evidence="6 7">Required for a general cell fate determination at the onset of development. Required for the specification of an initial population of prespore cells in which tagA is expressed. Required for normal SDF-2 signaling during spore encapsulation.</text>
</comment>
<comment type="subcellular location">
    <subcellularLocation>
        <location evidence="3">Membrane</location>
        <topology evidence="3">Multi-pass membrane protein</topology>
    </subcellularLocation>
</comment>
<comment type="developmental stage">
    <text evidence="6">Expressed in prespore and in mature spores, and at low levels in vegetative cells. Accumulates between 2 and 10 hours of development and decreases thereafter (at protein level).</text>
</comment>
<comment type="induction">
    <text evidence="8">Down-regulated by phagocytic stimuli (when grown on E.coli).</text>
</comment>
<comment type="disruption phenotype">
    <text evidence="6">TagA mutant aggregates elaborate multiple prestalk cell regions during development and produce spores asynchronously and with low viability. They produce about twice as many prestalk cells as the wild type as judged by a prestalk cell reporter construct. When mixed with wild-type cells, tagA-cells become overrepresented in the prestalk cell population, suggesting that this phenotype is cell-autonomous.</text>
</comment>
<comment type="similarity">
    <text evidence="9">In the C-terminal section; belongs to the ABC transporter superfamily. ABCB family. Multidrug resistance exporter (TC 3.A.1.201) subfamily.</text>
</comment>
<comment type="similarity">
    <text evidence="9">In the N-terminal section; belongs to the peptidase S8 family.</text>
</comment>